<keyword id="KW-0030">Aminoacyl-tRNA synthetase</keyword>
<keyword id="KW-0067">ATP-binding</keyword>
<keyword id="KW-0963">Cytoplasm</keyword>
<keyword id="KW-0436">Ligase</keyword>
<keyword id="KW-0460">Magnesium</keyword>
<keyword id="KW-0479">Metal-binding</keyword>
<keyword id="KW-0547">Nucleotide-binding</keyword>
<keyword id="KW-0648">Protein biosynthesis</keyword>
<sequence>MHTLIERLEKVTNSKELEEVRLNALGKKGVFADKFNQLKNLNGGEKNAFAKEIHHYKQAFEKAFEWKKKAILELELEERLKKEKIDVSLFNAIKTSSSHPLNYTKNKIIEFFTPLGYKLEIGSLVEDDFHNFSALNLPPYHPARDMQDTFYFKDHKLLRTHTSPVQIHTMQEQTPPIKMICLGETFRRDYDLTHTPMFHQIEGLVVDQKGNIRFTHLKGVIEDFLHYFFGGVKLRWRSSFFPFTEPSAEVDISCVFCKQEGCRVCSHTGWLEVLGCGMVNNAVFEAIGYENVSGFAFGMGIERLAMLTCQINDLRSFFETDLRVLESF</sequence>
<organism>
    <name type="scientific">Helicobacter pylori (strain P12)</name>
    <dbReference type="NCBI Taxonomy" id="570508"/>
    <lineage>
        <taxon>Bacteria</taxon>
        <taxon>Pseudomonadati</taxon>
        <taxon>Campylobacterota</taxon>
        <taxon>Epsilonproteobacteria</taxon>
        <taxon>Campylobacterales</taxon>
        <taxon>Helicobacteraceae</taxon>
        <taxon>Helicobacter</taxon>
    </lineage>
</organism>
<reference key="1">
    <citation type="submission" date="2008-10" db="EMBL/GenBank/DDBJ databases">
        <title>The complete genome sequence of Helicobacter pylori strain P12.</title>
        <authorList>
            <person name="Fischer W."/>
            <person name="Windhager L."/>
            <person name="Karnholz A."/>
            <person name="Zeiller M."/>
            <person name="Zimmer R."/>
            <person name="Haas R."/>
        </authorList>
    </citation>
    <scope>NUCLEOTIDE SEQUENCE [LARGE SCALE GENOMIC DNA]</scope>
    <source>
        <strain>P12</strain>
    </source>
</reference>
<name>SYFA_HELP2</name>
<gene>
    <name evidence="1" type="primary">pheS</name>
    <name type="ordered locus">HPP12_1017</name>
</gene>
<accession>B6JMP1</accession>
<evidence type="ECO:0000255" key="1">
    <source>
        <dbReference type="HAMAP-Rule" id="MF_00281"/>
    </source>
</evidence>
<protein>
    <recommendedName>
        <fullName evidence="1">Phenylalanine--tRNA ligase alpha subunit</fullName>
        <ecNumber evidence="1">6.1.1.20</ecNumber>
    </recommendedName>
    <alternativeName>
        <fullName evidence="1">Phenylalanyl-tRNA synthetase alpha subunit</fullName>
        <shortName evidence="1">PheRS</shortName>
    </alternativeName>
</protein>
<comment type="catalytic activity">
    <reaction evidence="1">
        <text>tRNA(Phe) + L-phenylalanine + ATP = L-phenylalanyl-tRNA(Phe) + AMP + diphosphate + H(+)</text>
        <dbReference type="Rhea" id="RHEA:19413"/>
        <dbReference type="Rhea" id="RHEA-COMP:9668"/>
        <dbReference type="Rhea" id="RHEA-COMP:9699"/>
        <dbReference type="ChEBI" id="CHEBI:15378"/>
        <dbReference type="ChEBI" id="CHEBI:30616"/>
        <dbReference type="ChEBI" id="CHEBI:33019"/>
        <dbReference type="ChEBI" id="CHEBI:58095"/>
        <dbReference type="ChEBI" id="CHEBI:78442"/>
        <dbReference type="ChEBI" id="CHEBI:78531"/>
        <dbReference type="ChEBI" id="CHEBI:456215"/>
        <dbReference type="EC" id="6.1.1.20"/>
    </reaction>
</comment>
<comment type="cofactor">
    <cofactor evidence="1">
        <name>Mg(2+)</name>
        <dbReference type="ChEBI" id="CHEBI:18420"/>
    </cofactor>
    <text evidence="1">Binds 2 magnesium ions per tetramer.</text>
</comment>
<comment type="subunit">
    <text evidence="1">Tetramer of two alpha and two beta subunits.</text>
</comment>
<comment type="subcellular location">
    <subcellularLocation>
        <location evidence="1">Cytoplasm</location>
    </subcellularLocation>
</comment>
<comment type="similarity">
    <text evidence="1">Belongs to the class-II aminoacyl-tRNA synthetase family. Phe-tRNA synthetase alpha subunit type 1 subfamily.</text>
</comment>
<dbReference type="EC" id="6.1.1.20" evidence="1"/>
<dbReference type="EMBL" id="CP001217">
    <property type="protein sequence ID" value="ACJ08169.1"/>
    <property type="molecule type" value="Genomic_DNA"/>
</dbReference>
<dbReference type="SMR" id="B6JMP1"/>
<dbReference type="KEGG" id="hpp:HPP12_1017"/>
<dbReference type="HOGENOM" id="CLU_025086_0_1_7"/>
<dbReference type="Proteomes" id="UP000008198">
    <property type="component" value="Chromosome"/>
</dbReference>
<dbReference type="GO" id="GO:0005737">
    <property type="term" value="C:cytoplasm"/>
    <property type="evidence" value="ECO:0007669"/>
    <property type="project" value="UniProtKB-SubCell"/>
</dbReference>
<dbReference type="GO" id="GO:0005524">
    <property type="term" value="F:ATP binding"/>
    <property type="evidence" value="ECO:0007669"/>
    <property type="project" value="UniProtKB-UniRule"/>
</dbReference>
<dbReference type="GO" id="GO:0000287">
    <property type="term" value="F:magnesium ion binding"/>
    <property type="evidence" value="ECO:0007669"/>
    <property type="project" value="UniProtKB-UniRule"/>
</dbReference>
<dbReference type="GO" id="GO:0004826">
    <property type="term" value="F:phenylalanine-tRNA ligase activity"/>
    <property type="evidence" value="ECO:0007669"/>
    <property type="project" value="UniProtKB-UniRule"/>
</dbReference>
<dbReference type="GO" id="GO:0000049">
    <property type="term" value="F:tRNA binding"/>
    <property type="evidence" value="ECO:0007669"/>
    <property type="project" value="InterPro"/>
</dbReference>
<dbReference type="GO" id="GO:0006432">
    <property type="term" value="P:phenylalanyl-tRNA aminoacylation"/>
    <property type="evidence" value="ECO:0007669"/>
    <property type="project" value="UniProtKB-UniRule"/>
</dbReference>
<dbReference type="CDD" id="cd00496">
    <property type="entry name" value="PheRS_alpha_core"/>
    <property type="match status" value="1"/>
</dbReference>
<dbReference type="FunFam" id="3.30.930.10:FF:000127">
    <property type="entry name" value="Phenylalanine--tRNA ligase alpha subunit"/>
    <property type="match status" value="1"/>
</dbReference>
<dbReference type="Gene3D" id="3.30.930.10">
    <property type="entry name" value="Bira Bifunctional Protein, Domain 2"/>
    <property type="match status" value="1"/>
</dbReference>
<dbReference type="HAMAP" id="MF_00281">
    <property type="entry name" value="Phe_tRNA_synth_alpha1"/>
    <property type="match status" value="1"/>
</dbReference>
<dbReference type="InterPro" id="IPR006195">
    <property type="entry name" value="aa-tRNA-synth_II"/>
</dbReference>
<dbReference type="InterPro" id="IPR045864">
    <property type="entry name" value="aa-tRNA-synth_II/BPL/LPL"/>
</dbReference>
<dbReference type="InterPro" id="IPR004529">
    <property type="entry name" value="Phe-tRNA-synth_IIc_asu"/>
</dbReference>
<dbReference type="InterPro" id="IPR004188">
    <property type="entry name" value="Phe-tRNA_ligase_II_N"/>
</dbReference>
<dbReference type="InterPro" id="IPR022911">
    <property type="entry name" value="Phe_tRNA_ligase_alpha1_bac"/>
</dbReference>
<dbReference type="InterPro" id="IPR002319">
    <property type="entry name" value="Phenylalanyl-tRNA_Synthase"/>
</dbReference>
<dbReference type="InterPro" id="IPR010978">
    <property type="entry name" value="tRNA-bd_arm"/>
</dbReference>
<dbReference type="NCBIfam" id="TIGR00468">
    <property type="entry name" value="pheS"/>
    <property type="match status" value="1"/>
</dbReference>
<dbReference type="PANTHER" id="PTHR11538:SF41">
    <property type="entry name" value="PHENYLALANINE--TRNA LIGASE, MITOCHONDRIAL"/>
    <property type="match status" value="1"/>
</dbReference>
<dbReference type="PANTHER" id="PTHR11538">
    <property type="entry name" value="PHENYLALANYL-TRNA SYNTHETASE"/>
    <property type="match status" value="1"/>
</dbReference>
<dbReference type="Pfam" id="PF02912">
    <property type="entry name" value="Phe_tRNA-synt_N"/>
    <property type="match status" value="1"/>
</dbReference>
<dbReference type="Pfam" id="PF01409">
    <property type="entry name" value="tRNA-synt_2d"/>
    <property type="match status" value="1"/>
</dbReference>
<dbReference type="SUPFAM" id="SSF55681">
    <property type="entry name" value="Class II aaRS and biotin synthetases"/>
    <property type="match status" value="1"/>
</dbReference>
<dbReference type="SUPFAM" id="SSF46589">
    <property type="entry name" value="tRNA-binding arm"/>
    <property type="match status" value="1"/>
</dbReference>
<dbReference type="PROSITE" id="PS50862">
    <property type="entry name" value="AA_TRNA_LIGASE_II"/>
    <property type="match status" value="1"/>
</dbReference>
<feature type="chain" id="PRO_1000114879" description="Phenylalanine--tRNA ligase alpha subunit">
    <location>
        <begin position="1"/>
        <end position="328"/>
    </location>
</feature>
<feature type="binding site" evidence="1">
    <location>
        <position position="245"/>
    </location>
    <ligand>
        <name>Mg(2+)</name>
        <dbReference type="ChEBI" id="CHEBI:18420"/>
        <note>shared with beta subunit</note>
    </ligand>
</feature>
<proteinExistence type="inferred from homology"/>